<protein>
    <recommendedName>
        <fullName evidence="1">DNA-directed RNA polymerase subunit omega</fullName>
        <shortName evidence="1">RNAP omega subunit</shortName>
        <ecNumber evidence="1">2.7.7.6</ecNumber>
    </recommendedName>
    <alternativeName>
        <fullName evidence="1">RNA polymerase omega subunit</fullName>
    </alternativeName>
    <alternativeName>
        <fullName evidence="1">Transcriptase subunit omega</fullName>
    </alternativeName>
</protein>
<keyword id="KW-0240">DNA-directed RNA polymerase</keyword>
<keyword id="KW-0548">Nucleotidyltransferase</keyword>
<keyword id="KW-1185">Reference proteome</keyword>
<keyword id="KW-0804">Transcription</keyword>
<keyword id="KW-0808">Transferase</keyword>
<accession>Q1LQ33</accession>
<gene>
    <name evidence="1" type="primary">rpoZ</name>
    <name type="ordered locus">Rmet_0857</name>
</gene>
<dbReference type="EC" id="2.7.7.6" evidence="1"/>
<dbReference type="EMBL" id="CP000352">
    <property type="protein sequence ID" value="ABF07743.1"/>
    <property type="molecule type" value="Genomic_DNA"/>
</dbReference>
<dbReference type="RefSeq" id="WP_006578656.1">
    <property type="nucleotide sequence ID" value="NC_007973.1"/>
</dbReference>
<dbReference type="SMR" id="Q1LQ33"/>
<dbReference type="STRING" id="266264.Rmet_0857"/>
<dbReference type="GeneID" id="98342150"/>
<dbReference type="KEGG" id="rme:Rmet_0857"/>
<dbReference type="eggNOG" id="COG1758">
    <property type="taxonomic scope" value="Bacteria"/>
</dbReference>
<dbReference type="HOGENOM" id="CLU_125406_5_1_4"/>
<dbReference type="Proteomes" id="UP000002429">
    <property type="component" value="Chromosome"/>
</dbReference>
<dbReference type="GO" id="GO:0000428">
    <property type="term" value="C:DNA-directed RNA polymerase complex"/>
    <property type="evidence" value="ECO:0007669"/>
    <property type="project" value="UniProtKB-KW"/>
</dbReference>
<dbReference type="GO" id="GO:0003677">
    <property type="term" value="F:DNA binding"/>
    <property type="evidence" value="ECO:0007669"/>
    <property type="project" value="UniProtKB-UniRule"/>
</dbReference>
<dbReference type="GO" id="GO:0003899">
    <property type="term" value="F:DNA-directed RNA polymerase activity"/>
    <property type="evidence" value="ECO:0007669"/>
    <property type="project" value="UniProtKB-UniRule"/>
</dbReference>
<dbReference type="GO" id="GO:0006351">
    <property type="term" value="P:DNA-templated transcription"/>
    <property type="evidence" value="ECO:0007669"/>
    <property type="project" value="UniProtKB-UniRule"/>
</dbReference>
<dbReference type="Gene3D" id="3.90.940.10">
    <property type="match status" value="1"/>
</dbReference>
<dbReference type="HAMAP" id="MF_00366">
    <property type="entry name" value="RNApol_bact_RpoZ"/>
    <property type="match status" value="1"/>
</dbReference>
<dbReference type="InterPro" id="IPR003716">
    <property type="entry name" value="DNA-dir_RNA_pol_omega"/>
</dbReference>
<dbReference type="InterPro" id="IPR006110">
    <property type="entry name" value="Pol_omega/Rpo6/RPB6"/>
</dbReference>
<dbReference type="InterPro" id="IPR036161">
    <property type="entry name" value="RPB6/omega-like_sf"/>
</dbReference>
<dbReference type="NCBIfam" id="TIGR00690">
    <property type="entry name" value="rpoZ"/>
    <property type="match status" value="1"/>
</dbReference>
<dbReference type="PANTHER" id="PTHR34476">
    <property type="entry name" value="DNA-DIRECTED RNA POLYMERASE SUBUNIT OMEGA"/>
    <property type="match status" value="1"/>
</dbReference>
<dbReference type="PANTHER" id="PTHR34476:SF1">
    <property type="entry name" value="DNA-DIRECTED RNA POLYMERASE SUBUNIT OMEGA"/>
    <property type="match status" value="1"/>
</dbReference>
<dbReference type="Pfam" id="PF01192">
    <property type="entry name" value="RNA_pol_Rpb6"/>
    <property type="match status" value="1"/>
</dbReference>
<dbReference type="SMART" id="SM01409">
    <property type="entry name" value="RNA_pol_Rpb6"/>
    <property type="match status" value="1"/>
</dbReference>
<dbReference type="SUPFAM" id="SSF63562">
    <property type="entry name" value="RPB6/omega subunit-like"/>
    <property type="match status" value="1"/>
</dbReference>
<name>RPOZ_CUPMC</name>
<evidence type="ECO:0000255" key="1">
    <source>
        <dbReference type="HAMAP-Rule" id="MF_00366"/>
    </source>
</evidence>
<proteinExistence type="inferred from homology"/>
<sequence length="67" mass="7439">MARITVEDCLKHIPNRFELALAATYRARQLVQGHTPKVEAKDKPTVVALREIASGQVGIEMLKKVPT</sequence>
<reference key="1">
    <citation type="journal article" date="2010" name="PLoS ONE">
        <title>The complete genome sequence of Cupriavidus metallidurans strain CH34, a master survivalist in harsh and anthropogenic environments.</title>
        <authorList>
            <person name="Janssen P.J."/>
            <person name="Van Houdt R."/>
            <person name="Moors H."/>
            <person name="Monsieurs P."/>
            <person name="Morin N."/>
            <person name="Michaux A."/>
            <person name="Benotmane M.A."/>
            <person name="Leys N."/>
            <person name="Vallaeys T."/>
            <person name="Lapidus A."/>
            <person name="Monchy S."/>
            <person name="Medigue C."/>
            <person name="Taghavi S."/>
            <person name="McCorkle S."/>
            <person name="Dunn J."/>
            <person name="van der Lelie D."/>
            <person name="Mergeay M."/>
        </authorList>
    </citation>
    <scope>NUCLEOTIDE SEQUENCE [LARGE SCALE GENOMIC DNA]</scope>
    <source>
        <strain>ATCC 43123 / DSM 2839 / NBRC 102507 / CH34</strain>
    </source>
</reference>
<organism>
    <name type="scientific">Cupriavidus metallidurans (strain ATCC 43123 / DSM 2839 / NBRC 102507 / CH34)</name>
    <name type="common">Ralstonia metallidurans</name>
    <dbReference type="NCBI Taxonomy" id="266264"/>
    <lineage>
        <taxon>Bacteria</taxon>
        <taxon>Pseudomonadati</taxon>
        <taxon>Pseudomonadota</taxon>
        <taxon>Betaproteobacteria</taxon>
        <taxon>Burkholderiales</taxon>
        <taxon>Burkholderiaceae</taxon>
        <taxon>Cupriavidus</taxon>
    </lineage>
</organism>
<comment type="function">
    <text evidence="1">Promotes RNA polymerase assembly. Latches the N- and C-terminal regions of the beta' subunit thereby facilitating its interaction with the beta and alpha subunits.</text>
</comment>
<comment type="catalytic activity">
    <reaction evidence="1">
        <text>RNA(n) + a ribonucleoside 5'-triphosphate = RNA(n+1) + diphosphate</text>
        <dbReference type="Rhea" id="RHEA:21248"/>
        <dbReference type="Rhea" id="RHEA-COMP:14527"/>
        <dbReference type="Rhea" id="RHEA-COMP:17342"/>
        <dbReference type="ChEBI" id="CHEBI:33019"/>
        <dbReference type="ChEBI" id="CHEBI:61557"/>
        <dbReference type="ChEBI" id="CHEBI:140395"/>
        <dbReference type="EC" id="2.7.7.6"/>
    </reaction>
</comment>
<comment type="subunit">
    <text evidence="1">The RNAP catalytic core consists of 2 alpha, 1 beta, 1 beta' and 1 omega subunit. When a sigma factor is associated with the core the holoenzyme is formed, which can initiate transcription.</text>
</comment>
<comment type="similarity">
    <text evidence="1">Belongs to the RNA polymerase subunit omega family.</text>
</comment>
<feature type="chain" id="PRO_1000005987" description="DNA-directed RNA polymerase subunit omega">
    <location>
        <begin position="1"/>
        <end position="67"/>
    </location>
</feature>